<organism>
    <name type="scientific">Dechloromonas aromatica (strain RCB)</name>
    <dbReference type="NCBI Taxonomy" id="159087"/>
    <lineage>
        <taxon>Bacteria</taxon>
        <taxon>Pseudomonadati</taxon>
        <taxon>Pseudomonadota</taxon>
        <taxon>Betaproteobacteria</taxon>
        <taxon>Rhodocyclales</taxon>
        <taxon>Azonexaceae</taxon>
        <taxon>Dechloromonas</taxon>
    </lineage>
</organism>
<feature type="chain" id="PRO_0000226495" description="Small ribosomal subunit protein uS7">
    <location>
        <begin position="1"/>
        <end position="156"/>
    </location>
</feature>
<comment type="function">
    <text evidence="1">One of the primary rRNA binding proteins, it binds directly to 16S rRNA where it nucleates assembly of the head domain of the 30S subunit. Is located at the subunit interface close to the decoding center, probably blocks exit of the E-site tRNA.</text>
</comment>
<comment type="subunit">
    <text evidence="1">Part of the 30S ribosomal subunit. Contacts proteins S9 and S11.</text>
</comment>
<comment type="similarity">
    <text evidence="1">Belongs to the universal ribosomal protein uS7 family.</text>
</comment>
<protein>
    <recommendedName>
        <fullName evidence="1">Small ribosomal subunit protein uS7</fullName>
    </recommendedName>
    <alternativeName>
        <fullName evidence="2">30S ribosomal protein S7</fullName>
    </alternativeName>
</protein>
<evidence type="ECO:0000255" key="1">
    <source>
        <dbReference type="HAMAP-Rule" id="MF_00480"/>
    </source>
</evidence>
<evidence type="ECO:0000305" key="2"/>
<accession>Q47JA7</accession>
<dbReference type="EMBL" id="CP000089">
    <property type="protein sequence ID" value="AAZ45074.1"/>
    <property type="molecule type" value="Genomic_DNA"/>
</dbReference>
<dbReference type="SMR" id="Q47JA7"/>
<dbReference type="STRING" id="159087.Daro_0315"/>
<dbReference type="KEGG" id="dar:Daro_0315"/>
<dbReference type="eggNOG" id="COG0049">
    <property type="taxonomic scope" value="Bacteria"/>
</dbReference>
<dbReference type="HOGENOM" id="CLU_072226_1_1_4"/>
<dbReference type="OrthoDB" id="9807653at2"/>
<dbReference type="GO" id="GO:0015935">
    <property type="term" value="C:small ribosomal subunit"/>
    <property type="evidence" value="ECO:0007669"/>
    <property type="project" value="InterPro"/>
</dbReference>
<dbReference type="GO" id="GO:0019843">
    <property type="term" value="F:rRNA binding"/>
    <property type="evidence" value="ECO:0007669"/>
    <property type="project" value="UniProtKB-UniRule"/>
</dbReference>
<dbReference type="GO" id="GO:0003735">
    <property type="term" value="F:structural constituent of ribosome"/>
    <property type="evidence" value="ECO:0007669"/>
    <property type="project" value="InterPro"/>
</dbReference>
<dbReference type="GO" id="GO:0000049">
    <property type="term" value="F:tRNA binding"/>
    <property type="evidence" value="ECO:0007669"/>
    <property type="project" value="UniProtKB-UniRule"/>
</dbReference>
<dbReference type="GO" id="GO:0006412">
    <property type="term" value="P:translation"/>
    <property type="evidence" value="ECO:0007669"/>
    <property type="project" value="UniProtKB-UniRule"/>
</dbReference>
<dbReference type="CDD" id="cd14869">
    <property type="entry name" value="uS7_Bacteria"/>
    <property type="match status" value="1"/>
</dbReference>
<dbReference type="FunFam" id="1.10.455.10:FF:000001">
    <property type="entry name" value="30S ribosomal protein S7"/>
    <property type="match status" value="1"/>
</dbReference>
<dbReference type="Gene3D" id="1.10.455.10">
    <property type="entry name" value="Ribosomal protein S7 domain"/>
    <property type="match status" value="1"/>
</dbReference>
<dbReference type="HAMAP" id="MF_00480_B">
    <property type="entry name" value="Ribosomal_uS7_B"/>
    <property type="match status" value="1"/>
</dbReference>
<dbReference type="InterPro" id="IPR000235">
    <property type="entry name" value="Ribosomal_uS7"/>
</dbReference>
<dbReference type="InterPro" id="IPR005717">
    <property type="entry name" value="Ribosomal_uS7_bac/org-type"/>
</dbReference>
<dbReference type="InterPro" id="IPR020606">
    <property type="entry name" value="Ribosomal_uS7_CS"/>
</dbReference>
<dbReference type="InterPro" id="IPR023798">
    <property type="entry name" value="Ribosomal_uS7_dom"/>
</dbReference>
<dbReference type="InterPro" id="IPR036823">
    <property type="entry name" value="Ribosomal_uS7_dom_sf"/>
</dbReference>
<dbReference type="NCBIfam" id="TIGR01029">
    <property type="entry name" value="rpsG_bact"/>
    <property type="match status" value="1"/>
</dbReference>
<dbReference type="PANTHER" id="PTHR11205">
    <property type="entry name" value="RIBOSOMAL PROTEIN S7"/>
    <property type="match status" value="1"/>
</dbReference>
<dbReference type="Pfam" id="PF00177">
    <property type="entry name" value="Ribosomal_S7"/>
    <property type="match status" value="1"/>
</dbReference>
<dbReference type="PIRSF" id="PIRSF002122">
    <property type="entry name" value="RPS7p_RPS7a_RPS5e_RPS7o"/>
    <property type="match status" value="1"/>
</dbReference>
<dbReference type="SUPFAM" id="SSF47973">
    <property type="entry name" value="Ribosomal protein S7"/>
    <property type="match status" value="1"/>
</dbReference>
<dbReference type="PROSITE" id="PS00052">
    <property type="entry name" value="RIBOSOMAL_S7"/>
    <property type="match status" value="1"/>
</dbReference>
<keyword id="KW-0687">Ribonucleoprotein</keyword>
<keyword id="KW-0689">Ribosomal protein</keyword>
<keyword id="KW-0694">RNA-binding</keyword>
<keyword id="KW-0699">rRNA-binding</keyword>
<keyword id="KW-0820">tRNA-binding</keyword>
<sequence length="156" mass="17555">MPRRREVPKRDILPDPKFGNVEVSKFVNAIMQSGKKSVAERIVYGAFDIITTKGGKDPLEVFSAAMSNVKPMVEVKSRRVGGANYQVPVEVRPARRAALAMRWLRESARKRSEKSMGQRLAAEMLEAAENRGGAVKKRDEVHRMAEANKAFAHFRF</sequence>
<name>RS7_DECAR</name>
<reference key="1">
    <citation type="journal article" date="2009" name="BMC Genomics">
        <title>Metabolic analysis of the soil microbe Dechloromonas aromatica str. RCB: indications of a surprisingly complex life-style and cryptic anaerobic pathways for aromatic degradation.</title>
        <authorList>
            <person name="Salinero K.K."/>
            <person name="Keller K."/>
            <person name="Feil W.S."/>
            <person name="Feil H."/>
            <person name="Trong S."/>
            <person name="Di Bartolo G."/>
            <person name="Lapidus A."/>
        </authorList>
    </citation>
    <scope>NUCLEOTIDE SEQUENCE [LARGE SCALE GENOMIC DNA]</scope>
    <source>
        <strain>RCB</strain>
    </source>
</reference>
<gene>
    <name evidence="1" type="primary">rpsG</name>
    <name type="ordered locus">Daro_0315</name>
</gene>
<proteinExistence type="inferred from homology"/>